<sequence>MSNEFINFEKISRESWKTLHQKAKALLTQEELKSITSLNDNISINDVIDIYLPLINLIQVYKIAQENLSFSKSLFLKKDIQLRPFIIGISGSVAVGKSTTSRLLQLLLSRTHPNSQVELVTTDGFLYPNQFLIEQGLLNRKGFPESYNMELLLDFLDSIKNGQTAFAPVYSHDIYDIIPNQKQSFNNPDFLIVEGINVFQNQQNNRLYMSDYFDFSIYIDADSSHIETWYIERFLSILKLAKRDPHNYYAQYAQLPRSEAIAFARNVWKTVNLENLEKFIEPTRNRAELILHKSADHKIDEIYLKK</sequence>
<proteinExistence type="inferred from homology"/>
<feature type="chain" id="PRO_1000043265" description="Pantothenate kinase">
    <location>
        <begin position="1"/>
        <end position="306"/>
    </location>
</feature>
<feature type="binding site" evidence="1">
    <location>
        <begin position="91"/>
        <end position="98"/>
    </location>
    <ligand>
        <name>ATP</name>
        <dbReference type="ChEBI" id="CHEBI:30616"/>
    </ligand>
</feature>
<comment type="catalytic activity">
    <reaction evidence="1">
        <text>(R)-pantothenate + ATP = (R)-4'-phosphopantothenate + ADP + H(+)</text>
        <dbReference type="Rhea" id="RHEA:16373"/>
        <dbReference type="ChEBI" id="CHEBI:10986"/>
        <dbReference type="ChEBI" id="CHEBI:15378"/>
        <dbReference type="ChEBI" id="CHEBI:29032"/>
        <dbReference type="ChEBI" id="CHEBI:30616"/>
        <dbReference type="ChEBI" id="CHEBI:456216"/>
        <dbReference type="EC" id="2.7.1.33"/>
    </reaction>
</comment>
<comment type="pathway">
    <text evidence="1">Cofactor biosynthesis; coenzyme A biosynthesis; CoA from (R)-pantothenate: step 1/5.</text>
</comment>
<comment type="subcellular location">
    <subcellularLocation>
        <location evidence="1">Cytoplasm</location>
    </subcellularLocation>
</comment>
<comment type="similarity">
    <text evidence="1">Belongs to the prokaryotic pantothenate kinase family.</text>
</comment>
<dbReference type="EC" id="2.7.1.33" evidence="1"/>
<dbReference type="EMBL" id="CP000262">
    <property type="protein sequence ID" value="ABF38044.1"/>
    <property type="molecule type" value="Genomic_DNA"/>
</dbReference>
<dbReference type="SMR" id="Q1J6D9"/>
<dbReference type="KEGG" id="spi:MGAS10750_Spy1094"/>
<dbReference type="HOGENOM" id="CLU_053818_1_1_9"/>
<dbReference type="UniPathway" id="UPA00241">
    <property type="reaction ID" value="UER00352"/>
</dbReference>
<dbReference type="Proteomes" id="UP000002434">
    <property type="component" value="Chromosome"/>
</dbReference>
<dbReference type="GO" id="GO:0005737">
    <property type="term" value="C:cytoplasm"/>
    <property type="evidence" value="ECO:0007669"/>
    <property type="project" value="UniProtKB-SubCell"/>
</dbReference>
<dbReference type="GO" id="GO:0005524">
    <property type="term" value="F:ATP binding"/>
    <property type="evidence" value="ECO:0007669"/>
    <property type="project" value="UniProtKB-UniRule"/>
</dbReference>
<dbReference type="GO" id="GO:0004594">
    <property type="term" value="F:pantothenate kinase activity"/>
    <property type="evidence" value="ECO:0007669"/>
    <property type="project" value="UniProtKB-UniRule"/>
</dbReference>
<dbReference type="GO" id="GO:0015937">
    <property type="term" value="P:coenzyme A biosynthetic process"/>
    <property type="evidence" value="ECO:0007669"/>
    <property type="project" value="UniProtKB-UniRule"/>
</dbReference>
<dbReference type="CDD" id="cd02025">
    <property type="entry name" value="PanK"/>
    <property type="match status" value="1"/>
</dbReference>
<dbReference type="Gene3D" id="3.40.50.300">
    <property type="entry name" value="P-loop containing nucleotide triphosphate hydrolases"/>
    <property type="match status" value="1"/>
</dbReference>
<dbReference type="HAMAP" id="MF_00215">
    <property type="entry name" value="Pantothen_kinase_1"/>
    <property type="match status" value="1"/>
</dbReference>
<dbReference type="InterPro" id="IPR027417">
    <property type="entry name" value="P-loop_NTPase"/>
</dbReference>
<dbReference type="InterPro" id="IPR004566">
    <property type="entry name" value="PanK"/>
</dbReference>
<dbReference type="InterPro" id="IPR006083">
    <property type="entry name" value="PRK/URK"/>
</dbReference>
<dbReference type="NCBIfam" id="TIGR00554">
    <property type="entry name" value="panK_bact"/>
    <property type="match status" value="1"/>
</dbReference>
<dbReference type="PANTHER" id="PTHR10285">
    <property type="entry name" value="URIDINE KINASE"/>
    <property type="match status" value="1"/>
</dbReference>
<dbReference type="Pfam" id="PF00485">
    <property type="entry name" value="PRK"/>
    <property type="match status" value="1"/>
</dbReference>
<dbReference type="PIRSF" id="PIRSF000545">
    <property type="entry name" value="Pantothenate_kin"/>
    <property type="match status" value="1"/>
</dbReference>
<dbReference type="SUPFAM" id="SSF52540">
    <property type="entry name" value="P-loop containing nucleoside triphosphate hydrolases"/>
    <property type="match status" value="1"/>
</dbReference>
<evidence type="ECO:0000255" key="1">
    <source>
        <dbReference type="HAMAP-Rule" id="MF_00215"/>
    </source>
</evidence>
<organism>
    <name type="scientific">Streptococcus pyogenes serotype M4 (strain MGAS10750)</name>
    <dbReference type="NCBI Taxonomy" id="370554"/>
    <lineage>
        <taxon>Bacteria</taxon>
        <taxon>Bacillati</taxon>
        <taxon>Bacillota</taxon>
        <taxon>Bacilli</taxon>
        <taxon>Lactobacillales</taxon>
        <taxon>Streptococcaceae</taxon>
        <taxon>Streptococcus</taxon>
    </lineage>
</organism>
<reference key="1">
    <citation type="journal article" date="2006" name="Proc. Natl. Acad. Sci. U.S.A.">
        <title>Molecular genetic anatomy of inter- and intraserotype variation in the human bacterial pathogen group A Streptococcus.</title>
        <authorList>
            <person name="Beres S.B."/>
            <person name="Richter E.W."/>
            <person name="Nagiec M.J."/>
            <person name="Sumby P."/>
            <person name="Porcella S.F."/>
            <person name="DeLeo F.R."/>
            <person name="Musser J.M."/>
        </authorList>
    </citation>
    <scope>NUCLEOTIDE SEQUENCE [LARGE SCALE GENOMIC DNA]</scope>
    <source>
        <strain>MGAS10750</strain>
    </source>
</reference>
<protein>
    <recommendedName>
        <fullName evidence="1">Pantothenate kinase</fullName>
        <ecNumber evidence="1">2.7.1.33</ecNumber>
    </recommendedName>
    <alternativeName>
        <fullName evidence="1">Pantothenic acid kinase</fullName>
    </alternativeName>
</protein>
<name>COAA_STRPF</name>
<accession>Q1J6D9</accession>
<gene>
    <name evidence="1" type="primary">coaA</name>
    <name type="ordered locus">MGAS10750_Spy1094</name>
</gene>
<keyword id="KW-0067">ATP-binding</keyword>
<keyword id="KW-0173">Coenzyme A biosynthesis</keyword>
<keyword id="KW-0963">Cytoplasm</keyword>
<keyword id="KW-0418">Kinase</keyword>
<keyword id="KW-0547">Nucleotide-binding</keyword>
<keyword id="KW-0808">Transferase</keyword>